<evidence type="ECO:0000269" key="1">
    <source>
    </source>
</evidence>
<evidence type="ECO:0000303" key="2">
    <source>
    </source>
</evidence>
<evidence type="ECO:0000305" key="3"/>
<evidence type="ECO:0000305" key="4">
    <source>
    </source>
</evidence>
<gene>
    <name evidence="2" type="primary">oryM</name>
    <name type="ORF">AO090010000161</name>
</gene>
<sequence>MTVTDSTPEGNVTAELCNWVTELKPSDIPADVLQRAKHLLLDGIACGLVGSHVPWSEQAAKAIDDYEPEGYCSVIGYNRRYGPQAAAILNGSFIQAVELDDYHSAAPLHSASVLLPALFAAAEVQSKGHRKSVVSGLDFLVALVVGFETGPRVGSAMYGADLLSRGWHSGPVFGSPAAAAASSKLLGLSPDDTESAVGIACTQAGGLMAAQYEGMVKRVQHAFAARNGLFGALLARDGYVGIKKVFDRSYGGFLTMFTQGNGRTPQYKPEEVTTALGKEWQTTNIRVKLHACVGGCHGQIEALEKLQRNYPDRFAVDQLHNIRRITVSLSEPVFAHDGWAPEERPLTATGGQMNAAYIGAAQLVYGQVLLDQFEPHALDSDAVWSLIDKTTCVHSSEFDKPGHLCGARIVVEFNDGETVEDVVAMPKGFDPPITDDEIREKWRKLASSVIDSERLQRIENSVLSLETSADVSELLALISGEL</sequence>
<dbReference type="EC" id="4.1.1.-" evidence="4"/>
<dbReference type="EMBL" id="BA000056">
    <property type="protein sequence ID" value="BAE66063.1"/>
    <property type="molecule type" value="Genomic_DNA"/>
</dbReference>
<dbReference type="RefSeq" id="XP_001827196.1">
    <property type="nucleotide sequence ID" value="XM_001827144.1"/>
</dbReference>
<dbReference type="SMR" id="Q2TXG0"/>
<dbReference type="STRING" id="510516.Q2TXG0"/>
<dbReference type="EnsemblFungi" id="BAE66063">
    <property type="protein sequence ID" value="BAE66063"/>
    <property type="gene ID" value="AO090010000161"/>
</dbReference>
<dbReference type="GeneID" id="5999330"/>
<dbReference type="KEGG" id="aor:AO090010000161"/>
<dbReference type="VEuPathDB" id="FungiDB:AO090010000161"/>
<dbReference type="HOGENOM" id="CLU_026574_1_1_1"/>
<dbReference type="OMA" id="INPGHRQ"/>
<dbReference type="OrthoDB" id="58558at5052"/>
<dbReference type="Proteomes" id="UP000006564">
    <property type="component" value="Chromosome 8"/>
</dbReference>
<dbReference type="GO" id="GO:0016829">
    <property type="term" value="F:lyase activity"/>
    <property type="evidence" value="ECO:0007669"/>
    <property type="project" value="UniProtKB-KW"/>
</dbReference>
<dbReference type="Gene3D" id="1.10.4100.10">
    <property type="entry name" value="2-methylcitrate dehydratase PrpD"/>
    <property type="match status" value="1"/>
</dbReference>
<dbReference type="InterPro" id="IPR036148">
    <property type="entry name" value="MmgE/PrpD_sf"/>
</dbReference>
<dbReference type="InterPro" id="IPR042183">
    <property type="entry name" value="MmgE/PrpD_sf_1"/>
</dbReference>
<dbReference type="InterPro" id="IPR005656">
    <property type="entry name" value="MmgE_PrpD"/>
</dbReference>
<dbReference type="InterPro" id="IPR045337">
    <property type="entry name" value="MmgE_PrpD_C"/>
</dbReference>
<dbReference type="InterPro" id="IPR045336">
    <property type="entry name" value="MmgE_PrpD_N"/>
</dbReference>
<dbReference type="PANTHER" id="PTHR16943:SF8">
    <property type="entry name" value="2-METHYLCITRATE DEHYDRATASE"/>
    <property type="match status" value="1"/>
</dbReference>
<dbReference type="PANTHER" id="PTHR16943">
    <property type="entry name" value="2-METHYLCITRATE DEHYDRATASE-RELATED"/>
    <property type="match status" value="1"/>
</dbReference>
<dbReference type="Pfam" id="PF19305">
    <property type="entry name" value="MmgE_PrpD_C"/>
    <property type="match status" value="1"/>
</dbReference>
<dbReference type="Pfam" id="PF03972">
    <property type="entry name" value="MmgE_PrpD_N"/>
    <property type="match status" value="1"/>
</dbReference>
<dbReference type="SUPFAM" id="SSF103378">
    <property type="entry name" value="2-methylcitrate dehydratase PrpD"/>
    <property type="match status" value="1"/>
</dbReference>
<name>ORYM_ASPOR</name>
<comment type="function">
    <text evidence="1 4">Cis-aconitate decarboxylase-like protein; part of the gene cluster that mediates the biosynthesis of oryzines, natural products with an unusual maleidride backbone (PubMed:30104550). The two subunits of the fungal fatty acid synthase oryfasA and oryfasB probably form octenoic acid (Probable). This fatty acid is most likely activated by the acyl-CoA ligase oryP to give octenyl-CoA before the citrate synthase-like protein oryE catalyzes condensation with oxaloacetate to form tricarboxylic acid (Probable). The next steps of the pathways are conjectural, but a favorite possible route has been proposed, beginning with decarboxylation and concomitant dehydration by the decarboxylase oryM, followed by tautomerization, which may lead to the production of a diene intermediate (Probable). Reduction of this diene intermediate could give the known metabolite piliformic acid (Probable). On the pathway to oryzine B and oryzine A, however, hydroxylation of the diene by the alpha-ketoglutarate-dependent dioxygenase oryG and lactonisation by the lactonohydrolases oryH or oryL could give oryzine B directly (Probable). Finally, enoyl reduction by the dehydrogenase oryD would then convert oryzine B into oryzine A (Probable).</text>
</comment>
<comment type="pathway">
    <text evidence="4">Secondary metabolite biosynthesis.</text>
</comment>
<comment type="similarity">
    <text evidence="3">Belongs to the PrpD family.</text>
</comment>
<proteinExistence type="inferred from homology"/>
<feature type="chain" id="PRO_0000450492" description="Cis-aconitate decarboxylase-like protein oryM">
    <location>
        <begin position="1"/>
        <end position="482"/>
    </location>
</feature>
<protein>
    <recommendedName>
        <fullName evidence="2">Cis-aconitate decarboxylase-like protein oryM</fullName>
        <ecNumber evidence="4">4.1.1.-</ecNumber>
    </recommendedName>
    <alternativeName>
        <fullName evidence="2">Oryzines biosynthesis cluster protein M</fullName>
    </alternativeName>
</protein>
<organism>
    <name type="scientific">Aspergillus oryzae (strain ATCC 42149 / RIB 40)</name>
    <name type="common">Yellow koji mold</name>
    <dbReference type="NCBI Taxonomy" id="510516"/>
    <lineage>
        <taxon>Eukaryota</taxon>
        <taxon>Fungi</taxon>
        <taxon>Dikarya</taxon>
        <taxon>Ascomycota</taxon>
        <taxon>Pezizomycotina</taxon>
        <taxon>Eurotiomycetes</taxon>
        <taxon>Eurotiomycetidae</taxon>
        <taxon>Eurotiales</taxon>
        <taxon>Aspergillaceae</taxon>
        <taxon>Aspergillus</taxon>
        <taxon>Aspergillus subgen. Circumdati</taxon>
    </lineage>
</organism>
<keyword id="KW-0456">Lyase</keyword>
<keyword id="KW-1185">Reference proteome</keyword>
<accession>Q2TXG0</accession>
<reference key="1">
    <citation type="journal article" date="2005" name="Nature">
        <title>Genome sequencing and analysis of Aspergillus oryzae.</title>
        <authorList>
            <person name="Machida M."/>
            <person name="Asai K."/>
            <person name="Sano M."/>
            <person name="Tanaka T."/>
            <person name="Kumagai T."/>
            <person name="Terai G."/>
            <person name="Kusumoto K."/>
            <person name="Arima T."/>
            <person name="Akita O."/>
            <person name="Kashiwagi Y."/>
            <person name="Abe K."/>
            <person name="Gomi K."/>
            <person name="Horiuchi H."/>
            <person name="Kitamoto K."/>
            <person name="Kobayashi T."/>
            <person name="Takeuchi M."/>
            <person name="Denning D.W."/>
            <person name="Galagan J.E."/>
            <person name="Nierman W.C."/>
            <person name="Yu J."/>
            <person name="Archer D.B."/>
            <person name="Bennett J.W."/>
            <person name="Bhatnagar D."/>
            <person name="Cleveland T.E."/>
            <person name="Fedorova N.D."/>
            <person name="Gotoh O."/>
            <person name="Horikawa H."/>
            <person name="Hosoyama A."/>
            <person name="Ichinomiya M."/>
            <person name="Igarashi R."/>
            <person name="Iwashita K."/>
            <person name="Juvvadi P.R."/>
            <person name="Kato M."/>
            <person name="Kato Y."/>
            <person name="Kin T."/>
            <person name="Kokubun A."/>
            <person name="Maeda H."/>
            <person name="Maeyama N."/>
            <person name="Maruyama J."/>
            <person name="Nagasaki H."/>
            <person name="Nakajima T."/>
            <person name="Oda K."/>
            <person name="Okada K."/>
            <person name="Paulsen I."/>
            <person name="Sakamoto K."/>
            <person name="Sawano T."/>
            <person name="Takahashi M."/>
            <person name="Takase K."/>
            <person name="Terabayashi Y."/>
            <person name="Wortman J.R."/>
            <person name="Yamada O."/>
            <person name="Yamagata Y."/>
            <person name="Anazawa H."/>
            <person name="Hata Y."/>
            <person name="Koide Y."/>
            <person name="Komori T."/>
            <person name="Koyama Y."/>
            <person name="Minetoki T."/>
            <person name="Suharnan S."/>
            <person name="Tanaka A."/>
            <person name="Isono K."/>
            <person name="Kuhara S."/>
            <person name="Ogasawara N."/>
            <person name="Kikuchi H."/>
        </authorList>
    </citation>
    <scope>NUCLEOTIDE SEQUENCE [LARGE SCALE GENOMIC DNA]</scope>
    <source>
        <strain>ATCC 42149 / RIB 40</strain>
    </source>
</reference>
<reference key="2">
    <citation type="journal article" date="2018" name="J. Fungi">
        <title>Oryzines A &amp; B, maleidride congeners from Aspergillus oryzae and their putative biosynthesis.</title>
        <authorList>
            <person name="Wasil Z."/>
            <person name="Kuhnert E."/>
            <person name="Simpson T.J."/>
            <person name="Cox R.J."/>
        </authorList>
    </citation>
    <scope>FUNCTION</scope>
    <scope>PATHWAY</scope>
</reference>